<protein>
    <recommendedName>
        <fullName evidence="2">Small ribosomal subunit protein uS12</fullName>
    </recommendedName>
    <alternativeName>
        <fullName evidence="3">30S ribosomal protein S12</fullName>
    </alternativeName>
</protein>
<gene>
    <name evidence="2" type="primary">rpsL</name>
    <name type="ordered locus">Acid345_1221</name>
</gene>
<dbReference type="EMBL" id="CP000360">
    <property type="protein sequence ID" value="ABF40223.1"/>
    <property type="molecule type" value="Genomic_DNA"/>
</dbReference>
<dbReference type="RefSeq" id="WP_011522025.1">
    <property type="nucleotide sequence ID" value="NC_008009.1"/>
</dbReference>
<dbReference type="SMR" id="Q1ISC7"/>
<dbReference type="STRING" id="204669.Acid345_1221"/>
<dbReference type="EnsemblBacteria" id="ABF40223">
    <property type="protein sequence ID" value="ABF40223"/>
    <property type="gene ID" value="Acid345_1221"/>
</dbReference>
<dbReference type="KEGG" id="aba:Acid345_1221"/>
<dbReference type="eggNOG" id="COG0048">
    <property type="taxonomic scope" value="Bacteria"/>
</dbReference>
<dbReference type="HOGENOM" id="CLU_104295_1_2_0"/>
<dbReference type="OrthoDB" id="9802366at2"/>
<dbReference type="Proteomes" id="UP000002432">
    <property type="component" value="Chromosome"/>
</dbReference>
<dbReference type="GO" id="GO:0015935">
    <property type="term" value="C:small ribosomal subunit"/>
    <property type="evidence" value="ECO:0007669"/>
    <property type="project" value="InterPro"/>
</dbReference>
<dbReference type="GO" id="GO:0019843">
    <property type="term" value="F:rRNA binding"/>
    <property type="evidence" value="ECO:0007669"/>
    <property type="project" value="UniProtKB-UniRule"/>
</dbReference>
<dbReference type="GO" id="GO:0003735">
    <property type="term" value="F:structural constituent of ribosome"/>
    <property type="evidence" value="ECO:0007669"/>
    <property type="project" value="InterPro"/>
</dbReference>
<dbReference type="GO" id="GO:0000049">
    <property type="term" value="F:tRNA binding"/>
    <property type="evidence" value="ECO:0007669"/>
    <property type="project" value="UniProtKB-UniRule"/>
</dbReference>
<dbReference type="GO" id="GO:0006412">
    <property type="term" value="P:translation"/>
    <property type="evidence" value="ECO:0007669"/>
    <property type="project" value="UniProtKB-UniRule"/>
</dbReference>
<dbReference type="CDD" id="cd03368">
    <property type="entry name" value="Ribosomal_S12"/>
    <property type="match status" value="1"/>
</dbReference>
<dbReference type="FunFam" id="2.40.50.140:FF:000001">
    <property type="entry name" value="30S ribosomal protein S12"/>
    <property type="match status" value="1"/>
</dbReference>
<dbReference type="Gene3D" id="2.40.50.140">
    <property type="entry name" value="Nucleic acid-binding proteins"/>
    <property type="match status" value="1"/>
</dbReference>
<dbReference type="HAMAP" id="MF_00403_B">
    <property type="entry name" value="Ribosomal_uS12_B"/>
    <property type="match status" value="1"/>
</dbReference>
<dbReference type="InterPro" id="IPR012340">
    <property type="entry name" value="NA-bd_OB-fold"/>
</dbReference>
<dbReference type="InterPro" id="IPR006032">
    <property type="entry name" value="Ribosomal_uS12"/>
</dbReference>
<dbReference type="InterPro" id="IPR005679">
    <property type="entry name" value="Ribosomal_uS12_bac"/>
</dbReference>
<dbReference type="NCBIfam" id="TIGR00981">
    <property type="entry name" value="rpsL_bact"/>
    <property type="match status" value="1"/>
</dbReference>
<dbReference type="PANTHER" id="PTHR11652">
    <property type="entry name" value="30S RIBOSOMAL PROTEIN S12 FAMILY MEMBER"/>
    <property type="match status" value="1"/>
</dbReference>
<dbReference type="Pfam" id="PF00164">
    <property type="entry name" value="Ribosom_S12_S23"/>
    <property type="match status" value="1"/>
</dbReference>
<dbReference type="PIRSF" id="PIRSF002133">
    <property type="entry name" value="Ribosomal_S12/S23"/>
    <property type="match status" value="1"/>
</dbReference>
<dbReference type="PRINTS" id="PR01034">
    <property type="entry name" value="RIBOSOMALS12"/>
</dbReference>
<dbReference type="SUPFAM" id="SSF50249">
    <property type="entry name" value="Nucleic acid-binding proteins"/>
    <property type="match status" value="1"/>
</dbReference>
<dbReference type="PROSITE" id="PS00055">
    <property type="entry name" value="RIBOSOMAL_S12"/>
    <property type="match status" value="1"/>
</dbReference>
<reference key="1">
    <citation type="journal article" date="2009" name="Appl. Environ. Microbiol.">
        <title>Three genomes from the phylum Acidobacteria provide insight into the lifestyles of these microorganisms in soils.</title>
        <authorList>
            <person name="Ward N.L."/>
            <person name="Challacombe J.F."/>
            <person name="Janssen P.H."/>
            <person name="Henrissat B."/>
            <person name="Coutinho P.M."/>
            <person name="Wu M."/>
            <person name="Xie G."/>
            <person name="Haft D.H."/>
            <person name="Sait M."/>
            <person name="Badger J."/>
            <person name="Barabote R.D."/>
            <person name="Bradley B."/>
            <person name="Brettin T.S."/>
            <person name="Brinkac L.M."/>
            <person name="Bruce D."/>
            <person name="Creasy T."/>
            <person name="Daugherty S.C."/>
            <person name="Davidsen T.M."/>
            <person name="DeBoy R.T."/>
            <person name="Detter J.C."/>
            <person name="Dodson R.J."/>
            <person name="Durkin A.S."/>
            <person name="Ganapathy A."/>
            <person name="Gwinn-Giglio M."/>
            <person name="Han C.S."/>
            <person name="Khouri H."/>
            <person name="Kiss H."/>
            <person name="Kothari S.P."/>
            <person name="Madupu R."/>
            <person name="Nelson K.E."/>
            <person name="Nelson W.C."/>
            <person name="Paulsen I."/>
            <person name="Penn K."/>
            <person name="Ren Q."/>
            <person name="Rosovitz M.J."/>
            <person name="Selengut J.D."/>
            <person name="Shrivastava S."/>
            <person name="Sullivan S.A."/>
            <person name="Tapia R."/>
            <person name="Thompson L.S."/>
            <person name="Watkins K.L."/>
            <person name="Yang Q."/>
            <person name="Yu C."/>
            <person name="Zafar N."/>
            <person name="Zhou L."/>
            <person name="Kuske C.R."/>
        </authorList>
    </citation>
    <scope>NUCLEOTIDE SEQUENCE [LARGE SCALE GENOMIC DNA]</scope>
    <source>
        <strain>Ellin345</strain>
    </source>
</reference>
<sequence>MPTFNQLVRKGRTAPKFKTASPALQSCPQKRGVCTRVYTQTPKKPNSALRKVARVRLTNGIEVTTYIPGIGHNLQEHSIVLIRGGRVKDLPGVRYHVVRGTLDSVGVANRKQGRSKYGAKRPKA</sequence>
<feature type="chain" id="PRO_0000263540" description="Small ribosomal subunit protein uS12">
    <location>
        <begin position="1"/>
        <end position="124"/>
    </location>
</feature>
<feature type="modified residue" description="3-methylthioaspartic acid" evidence="1">
    <location>
        <position position="89"/>
    </location>
</feature>
<accession>Q1ISC7</accession>
<proteinExistence type="inferred from homology"/>
<name>RS12_KORVE</name>
<organism>
    <name type="scientific">Koribacter versatilis (strain Ellin345)</name>
    <dbReference type="NCBI Taxonomy" id="204669"/>
    <lineage>
        <taxon>Bacteria</taxon>
        <taxon>Pseudomonadati</taxon>
        <taxon>Acidobacteriota</taxon>
        <taxon>Terriglobia</taxon>
        <taxon>Terriglobales</taxon>
        <taxon>Candidatus Korobacteraceae</taxon>
        <taxon>Candidatus Korobacter</taxon>
    </lineage>
</organism>
<evidence type="ECO:0000250" key="1"/>
<evidence type="ECO:0000255" key="2">
    <source>
        <dbReference type="HAMAP-Rule" id="MF_00403"/>
    </source>
</evidence>
<evidence type="ECO:0000305" key="3"/>
<comment type="function">
    <text evidence="2">With S4 and S5 plays an important role in translational accuracy.</text>
</comment>
<comment type="function">
    <text evidence="2">Interacts with and stabilizes bases of the 16S rRNA that are involved in tRNA selection in the A site and with the mRNA backbone. Located at the interface of the 30S and 50S subunits, it traverses the body of the 30S subunit contacting proteins on the other side and probably holding the rRNA structure together. The combined cluster of proteins S8, S12 and S17 appears to hold together the shoulder and platform of the 30S subunit.</text>
</comment>
<comment type="subunit">
    <text evidence="2">Part of the 30S ribosomal subunit. Contacts proteins S8 and S17. May interact with IF1 in the 30S initiation complex.</text>
</comment>
<comment type="similarity">
    <text evidence="2">Belongs to the universal ribosomal protein uS12 family.</text>
</comment>
<keyword id="KW-0488">Methylation</keyword>
<keyword id="KW-1185">Reference proteome</keyword>
<keyword id="KW-0687">Ribonucleoprotein</keyword>
<keyword id="KW-0689">Ribosomal protein</keyword>
<keyword id="KW-0694">RNA-binding</keyword>
<keyword id="KW-0699">rRNA-binding</keyword>
<keyword id="KW-0820">tRNA-binding</keyword>